<gene>
    <name evidence="1" type="primary">glgB</name>
    <name type="ordered locus">VF_A0808</name>
</gene>
<dbReference type="EC" id="2.4.1.18" evidence="1"/>
<dbReference type="EMBL" id="CP000021">
    <property type="protein sequence ID" value="AAW87878.1"/>
    <property type="molecule type" value="Genomic_DNA"/>
</dbReference>
<dbReference type="RefSeq" id="WP_011263628.1">
    <property type="nucleotide sequence ID" value="NC_006841.2"/>
</dbReference>
<dbReference type="RefSeq" id="YP_206766.1">
    <property type="nucleotide sequence ID" value="NC_006841.2"/>
</dbReference>
<dbReference type="SMR" id="Q5DZB8"/>
<dbReference type="STRING" id="312309.VF_A0808"/>
<dbReference type="CAZy" id="CBM48">
    <property type="family name" value="Carbohydrate-Binding Module Family 48"/>
</dbReference>
<dbReference type="CAZy" id="GH13">
    <property type="family name" value="Glycoside Hydrolase Family 13"/>
</dbReference>
<dbReference type="EnsemblBacteria" id="AAW87878">
    <property type="protein sequence ID" value="AAW87878"/>
    <property type="gene ID" value="VF_A0808"/>
</dbReference>
<dbReference type="GeneID" id="54166127"/>
<dbReference type="KEGG" id="vfi:VF_A0808"/>
<dbReference type="PATRIC" id="fig|312309.11.peg.3410"/>
<dbReference type="eggNOG" id="COG0296">
    <property type="taxonomic scope" value="Bacteria"/>
</dbReference>
<dbReference type="HOGENOM" id="CLU_004245_3_2_6"/>
<dbReference type="OrthoDB" id="9800174at2"/>
<dbReference type="UniPathway" id="UPA00164"/>
<dbReference type="Proteomes" id="UP000000537">
    <property type="component" value="Chromosome II"/>
</dbReference>
<dbReference type="GO" id="GO:0005829">
    <property type="term" value="C:cytosol"/>
    <property type="evidence" value="ECO:0007669"/>
    <property type="project" value="TreeGrafter"/>
</dbReference>
<dbReference type="GO" id="GO:0003844">
    <property type="term" value="F:1,4-alpha-glucan branching enzyme activity"/>
    <property type="evidence" value="ECO:0007669"/>
    <property type="project" value="UniProtKB-UniRule"/>
</dbReference>
<dbReference type="GO" id="GO:0043169">
    <property type="term" value="F:cation binding"/>
    <property type="evidence" value="ECO:0007669"/>
    <property type="project" value="InterPro"/>
</dbReference>
<dbReference type="GO" id="GO:0004553">
    <property type="term" value="F:hydrolase activity, hydrolyzing O-glycosyl compounds"/>
    <property type="evidence" value="ECO:0007669"/>
    <property type="project" value="InterPro"/>
</dbReference>
<dbReference type="GO" id="GO:0005978">
    <property type="term" value="P:glycogen biosynthetic process"/>
    <property type="evidence" value="ECO:0007669"/>
    <property type="project" value="UniProtKB-UniRule"/>
</dbReference>
<dbReference type="CDD" id="cd11322">
    <property type="entry name" value="AmyAc_Glg_BE"/>
    <property type="match status" value="1"/>
</dbReference>
<dbReference type="CDD" id="cd02855">
    <property type="entry name" value="E_set_GBE_prok_N"/>
    <property type="match status" value="1"/>
</dbReference>
<dbReference type="FunFam" id="2.60.40.1180:FF:000002">
    <property type="entry name" value="1,4-alpha-glucan branching enzyme GlgB"/>
    <property type="match status" value="1"/>
</dbReference>
<dbReference type="FunFam" id="3.20.20.80:FF:000003">
    <property type="entry name" value="1,4-alpha-glucan branching enzyme GlgB"/>
    <property type="match status" value="1"/>
</dbReference>
<dbReference type="Gene3D" id="3.20.20.80">
    <property type="entry name" value="Glycosidases"/>
    <property type="match status" value="1"/>
</dbReference>
<dbReference type="Gene3D" id="2.60.40.1180">
    <property type="entry name" value="Golgi alpha-mannosidase II"/>
    <property type="match status" value="1"/>
</dbReference>
<dbReference type="Gene3D" id="2.60.40.10">
    <property type="entry name" value="Immunoglobulins"/>
    <property type="match status" value="2"/>
</dbReference>
<dbReference type="HAMAP" id="MF_00685">
    <property type="entry name" value="GlgB"/>
    <property type="match status" value="1"/>
</dbReference>
<dbReference type="InterPro" id="IPR006048">
    <property type="entry name" value="A-amylase/branching_C"/>
</dbReference>
<dbReference type="InterPro" id="IPR037439">
    <property type="entry name" value="Branching_enzy"/>
</dbReference>
<dbReference type="InterPro" id="IPR006407">
    <property type="entry name" value="GlgB"/>
</dbReference>
<dbReference type="InterPro" id="IPR054169">
    <property type="entry name" value="GlgB_N"/>
</dbReference>
<dbReference type="InterPro" id="IPR044143">
    <property type="entry name" value="GlgB_N_E_set_prok"/>
</dbReference>
<dbReference type="InterPro" id="IPR006047">
    <property type="entry name" value="Glyco_hydro_13_cat_dom"/>
</dbReference>
<dbReference type="InterPro" id="IPR004193">
    <property type="entry name" value="Glyco_hydro_13_N"/>
</dbReference>
<dbReference type="InterPro" id="IPR013780">
    <property type="entry name" value="Glyco_hydro_b"/>
</dbReference>
<dbReference type="InterPro" id="IPR017853">
    <property type="entry name" value="Glycoside_hydrolase_SF"/>
</dbReference>
<dbReference type="InterPro" id="IPR013783">
    <property type="entry name" value="Ig-like_fold"/>
</dbReference>
<dbReference type="InterPro" id="IPR014756">
    <property type="entry name" value="Ig_E-set"/>
</dbReference>
<dbReference type="NCBIfam" id="TIGR01515">
    <property type="entry name" value="branching_enzym"/>
    <property type="match status" value="1"/>
</dbReference>
<dbReference type="NCBIfam" id="NF003811">
    <property type="entry name" value="PRK05402.1"/>
    <property type="match status" value="1"/>
</dbReference>
<dbReference type="NCBIfam" id="NF008967">
    <property type="entry name" value="PRK12313.1"/>
    <property type="match status" value="1"/>
</dbReference>
<dbReference type="PANTHER" id="PTHR43651">
    <property type="entry name" value="1,4-ALPHA-GLUCAN-BRANCHING ENZYME"/>
    <property type="match status" value="1"/>
</dbReference>
<dbReference type="PANTHER" id="PTHR43651:SF3">
    <property type="entry name" value="1,4-ALPHA-GLUCAN-BRANCHING ENZYME"/>
    <property type="match status" value="1"/>
</dbReference>
<dbReference type="Pfam" id="PF00128">
    <property type="entry name" value="Alpha-amylase"/>
    <property type="match status" value="1"/>
</dbReference>
<dbReference type="Pfam" id="PF02806">
    <property type="entry name" value="Alpha-amylase_C"/>
    <property type="match status" value="1"/>
</dbReference>
<dbReference type="Pfam" id="PF02922">
    <property type="entry name" value="CBM_48"/>
    <property type="match status" value="1"/>
</dbReference>
<dbReference type="Pfam" id="PF22019">
    <property type="entry name" value="GlgB_N"/>
    <property type="match status" value="1"/>
</dbReference>
<dbReference type="PIRSF" id="PIRSF000463">
    <property type="entry name" value="GlgB"/>
    <property type="match status" value="1"/>
</dbReference>
<dbReference type="SMART" id="SM00642">
    <property type="entry name" value="Aamy"/>
    <property type="match status" value="1"/>
</dbReference>
<dbReference type="SUPFAM" id="SSF51445">
    <property type="entry name" value="(Trans)glycosidases"/>
    <property type="match status" value="1"/>
</dbReference>
<dbReference type="SUPFAM" id="SSF81296">
    <property type="entry name" value="E set domains"/>
    <property type="match status" value="2"/>
</dbReference>
<dbReference type="SUPFAM" id="SSF51011">
    <property type="entry name" value="Glycosyl hydrolase domain"/>
    <property type="match status" value="1"/>
</dbReference>
<evidence type="ECO:0000255" key="1">
    <source>
        <dbReference type="HAMAP-Rule" id="MF_00685"/>
    </source>
</evidence>
<accession>Q5DZB8</accession>
<comment type="function">
    <text evidence="1">Catalyzes the formation of the alpha-1,6-glucosidic linkages in glycogen by scission of a 1,4-alpha-linked oligosaccharide from growing alpha-1,4-glucan chains and the subsequent attachment of the oligosaccharide to the alpha-1,6 position.</text>
</comment>
<comment type="catalytic activity">
    <reaction evidence="1">
        <text>Transfers a segment of a (1-&gt;4)-alpha-D-glucan chain to a primary hydroxy group in a similar glucan chain.</text>
        <dbReference type="EC" id="2.4.1.18"/>
    </reaction>
</comment>
<comment type="pathway">
    <text evidence="1">Glycan biosynthesis; glycogen biosynthesis.</text>
</comment>
<comment type="subunit">
    <text evidence="1">Monomer.</text>
</comment>
<comment type="similarity">
    <text evidence="1">Belongs to the glycosyl hydrolase 13 family. GlgB subfamily.</text>
</comment>
<name>GLGB_ALIF1</name>
<feature type="chain" id="PRO_0000188760" description="1,4-alpha-glucan branching enzyme GlgB">
    <location>
        <begin position="1"/>
        <end position="715"/>
    </location>
</feature>
<feature type="active site" description="Nucleophile" evidence="1">
    <location>
        <position position="396"/>
    </location>
</feature>
<feature type="active site" description="Proton donor" evidence="1">
    <location>
        <position position="449"/>
    </location>
</feature>
<keyword id="KW-0119">Carbohydrate metabolism</keyword>
<keyword id="KW-0320">Glycogen biosynthesis</keyword>
<keyword id="KW-0321">Glycogen metabolism</keyword>
<keyword id="KW-0328">Glycosyltransferase</keyword>
<keyword id="KW-1185">Reference proteome</keyword>
<keyword id="KW-0808">Transferase</keyword>
<sequence>MQLERAAFSDPFSFLGPQYQSQTTALRVWLPGATSVKVRLSGHVEYQLLSDPRHSGIFVLNESIDMTEVHYELIIDWSGTEQILDDPYQYHDISPTDAQVHTPKEMYNHLGAHLFNVVRDGKQIQGVRYLVFAPNASSASVIGDFNQWDGRRHIMQRIDNGLWALFIPEHAVGTKYKFELKGPNGESLPHKMDPYGAHNEQYPSFASVVYDQTSYQWNDAKWQQRPVTEKQKEALSFYELHAGSWKRNENGDFLTYRELAEQLIPYILDMGYTHIELMPVSEHPFYGSWGYQPIGLFSPTSRFGTPDDFKYFVDQCHQVGIGVVLDWVPAHFPSDSHGLANFDGTSLFNDPDPRRGWHNDWQSFIYNYDQPHVREFLVSNALYWFEHFHIDGLRVDAVASMLYLDYSRNDGEWIPNWEGGNHNHGAIALLKWMNEEVYSHYPNAMTIAEESTAFPGVSAPTFAGGLGFGFKWNMGWMHDSLNYIREDPIHRKYHHDTITFPLVYAFSENFILSLSHDEVVYGKGSILDKMPGDEWQKTANLRAYMGYMYGQPGKKLNFMGAEIAQSAEWDHDGQLQWFLTQFERHSGMQSLVRDLNKLYTTEPALYQKDCEPAGFEWRLQDEAEMSVLAHERLGDNGERILVVSNFTPAPREDFRLGMPVAGQYELILNSDAHFYGGSDYSVISEASTEKVESQGLAQSIVITLPPLSTVFYRLK</sequence>
<proteinExistence type="inferred from homology"/>
<protein>
    <recommendedName>
        <fullName evidence="1">1,4-alpha-glucan branching enzyme GlgB</fullName>
        <ecNumber evidence="1">2.4.1.18</ecNumber>
    </recommendedName>
    <alternativeName>
        <fullName evidence="1">1,4-alpha-D-glucan:1,4-alpha-D-glucan 6-glucosyl-transferase</fullName>
    </alternativeName>
    <alternativeName>
        <fullName evidence="1">Alpha-(1-&gt;4)-glucan branching enzyme</fullName>
    </alternativeName>
    <alternativeName>
        <fullName evidence="1">Glycogen branching enzyme</fullName>
        <shortName evidence="1">BE</shortName>
    </alternativeName>
</protein>
<reference key="1">
    <citation type="journal article" date="2005" name="Proc. Natl. Acad. Sci. U.S.A.">
        <title>Complete genome sequence of Vibrio fischeri: a symbiotic bacterium with pathogenic congeners.</title>
        <authorList>
            <person name="Ruby E.G."/>
            <person name="Urbanowski M."/>
            <person name="Campbell J."/>
            <person name="Dunn A."/>
            <person name="Faini M."/>
            <person name="Gunsalus R."/>
            <person name="Lostroh P."/>
            <person name="Lupp C."/>
            <person name="McCann J."/>
            <person name="Millikan D."/>
            <person name="Schaefer A."/>
            <person name="Stabb E."/>
            <person name="Stevens A."/>
            <person name="Visick K."/>
            <person name="Whistler C."/>
            <person name="Greenberg E.P."/>
        </authorList>
    </citation>
    <scope>NUCLEOTIDE SEQUENCE [LARGE SCALE GENOMIC DNA]</scope>
    <source>
        <strain>ATCC 700601 / ES114</strain>
    </source>
</reference>
<organism>
    <name type="scientific">Aliivibrio fischeri (strain ATCC 700601 / ES114)</name>
    <name type="common">Vibrio fischeri</name>
    <dbReference type="NCBI Taxonomy" id="312309"/>
    <lineage>
        <taxon>Bacteria</taxon>
        <taxon>Pseudomonadati</taxon>
        <taxon>Pseudomonadota</taxon>
        <taxon>Gammaproteobacteria</taxon>
        <taxon>Vibrionales</taxon>
        <taxon>Vibrionaceae</taxon>
        <taxon>Aliivibrio</taxon>
    </lineage>
</organism>